<protein>
    <recommendedName>
        <fullName evidence="3">Periviscerokinin-3b</fullName>
        <shortName evidence="3">PanVi-PVK-3b</shortName>
    </recommendedName>
</protein>
<reference evidence="4" key="1">
    <citation type="journal article" date="2009" name="BMC Evol. Biol.">
        <title>A proteomic approach for studying insect phylogeny: CAPA peptides of ancient insect taxa (Dictyoptera, Blattoptera) as a test case.</title>
        <authorList>
            <person name="Roth S."/>
            <person name="Fromm B."/>
            <person name="Gaede G."/>
            <person name="Predel R."/>
        </authorList>
    </citation>
    <scope>PROTEIN SEQUENCE</scope>
    <scope>AMIDATION AT VAL-12</scope>
    <source>
        <tissue evidence="2">Abdominal perisympathetic organs</tissue>
    </source>
</reference>
<comment type="function">
    <text evidence="4">Mediates visceral muscle contractile activity (myotropic activity).</text>
</comment>
<comment type="subcellular location">
    <subcellularLocation>
        <location evidence="4">Secreted</location>
    </subcellularLocation>
</comment>
<comment type="similarity">
    <text evidence="1">Belongs to the periviscerokinin family.</text>
</comment>
<proteinExistence type="evidence at protein level"/>
<accession>P85700</accession>
<name>PVK3B_PANVI</name>
<sequence length="12" mass="1204">GSSGGMIPFPRV</sequence>
<dbReference type="GO" id="GO:0005576">
    <property type="term" value="C:extracellular region"/>
    <property type="evidence" value="ECO:0007669"/>
    <property type="project" value="UniProtKB-SubCell"/>
</dbReference>
<dbReference type="GO" id="GO:0007218">
    <property type="term" value="P:neuropeptide signaling pathway"/>
    <property type="evidence" value="ECO:0007669"/>
    <property type="project" value="UniProtKB-KW"/>
</dbReference>
<dbReference type="InterPro" id="IPR013231">
    <property type="entry name" value="Periviscerokinin"/>
</dbReference>
<dbReference type="Pfam" id="PF08259">
    <property type="entry name" value="Periviscerokin"/>
    <property type="match status" value="1"/>
</dbReference>
<feature type="peptide" id="PRO_0000378816" description="Periviscerokinin-3b" evidence="2">
    <location>
        <begin position="1"/>
        <end position="12"/>
    </location>
</feature>
<feature type="modified residue" description="Valine amide" evidence="2">
    <location>
        <position position="12"/>
    </location>
</feature>
<organism>
    <name type="scientific">Panchlora viridis</name>
    <name type="common">Cockroach</name>
    <dbReference type="NCBI Taxonomy" id="344693"/>
    <lineage>
        <taxon>Eukaryota</taxon>
        <taxon>Metazoa</taxon>
        <taxon>Ecdysozoa</taxon>
        <taxon>Arthropoda</taxon>
        <taxon>Hexapoda</taxon>
        <taxon>Insecta</taxon>
        <taxon>Pterygota</taxon>
        <taxon>Neoptera</taxon>
        <taxon>Polyneoptera</taxon>
        <taxon>Dictyoptera</taxon>
        <taxon>Blattodea</taxon>
        <taxon>Blaberoidea</taxon>
        <taxon>Blaberidae</taxon>
        <taxon>Panchlorinae</taxon>
        <taxon>Panchlora</taxon>
    </lineage>
</organism>
<evidence type="ECO:0000255" key="1"/>
<evidence type="ECO:0000269" key="2">
    <source>
    </source>
</evidence>
<evidence type="ECO:0000303" key="3">
    <source>
    </source>
</evidence>
<evidence type="ECO:0000305" key="4"/>
<keyword id="KW-0027">Amidation</keyword>
<keyword id="KW-0903">Direct protein sequencing</keyword>
<keyword id="KW-0527">Neuropeptide</keyword>
<keyword id="KW-0964">Secreted</keyword>